<comment type="function">
    <text evidence="1">One of several proteins that assist in the late maturation steps of the functional core of the 30S ribosomal subunit. Associates with free 30S ribosomal subunits (but not with 30S subunits that are part of 70S ribosomes or polysomes). Required for efficient processing of 16S rRNA. May interact with the 5'-terminal helix region of 16S rRNA.</text>
</comment>
<comment type="subunit">
    <text evidence="1">Monomer. Binds 30S ribosomal subunits, but not 50S ribosomal subunits or 70S ribosomes.</text>
</comment>
<comment type="subcellular location">
    <subcellularLocation>
        <location evidence="1">Cytoplasm</location>
    </subcellularLocation>
</comment>
<comment type="similarity">
    <text evidence="1">Belongs to the RbfA family.</text>
</comment>
<evidence type="ECO:0000255" key="1">
    <source>
        <dbReference type="HAMAP-Rule" id="MF_00003"/>
    </source>
</evidence>
<evidence type="ECO:0000256" key="2">
    <source>
        <dbReference type="SAM" id="MobiDB-lite"/>
    </source>
</evidence>
<feature type="chain" id="PRO_1000201640" description="Ribosome-binding factor A">
    <location>
        <begin position="1"/>
        <end position="145"/>
    </location>
</feature>
<feature type="region of interest" description="Disordered" evidence="2">
    <location>
        <begin position="122"/>
        <end position="145"/>
    </location>
</feature>
<feature type="compositionally biased region" description="Basic and acidic residues" evidence="2">
    <location>
        <begin position="122"/>
        <end position="132"/>
    </location>
</feature>
<proteinExistence type="inferred from homology"/>
<dbReference type="EMBL" id="CP000908">
    <property type="protein sequence ID" value="ABY31087.1"/>
    <property type="molecule type" value="Genomic_DNA"/>
</dbReference>
<dbReference type="RefSeq" id="WP_003605149.1">
    <property type="nucleotide sequence ID" value="NC_010172.1"/>
</dbReference>
<dbReference type="SMR" id="A9W681"/>
<dbReference type="GeneID" id="72990344"/>
<dbReference type="KEGG" id="mex:Mext_2696"/>
<dbReference type="eggNOG" id="COG0858">
    <property type="taxonomic scope" value="Bacteria"/>
</dbReference>
<dbReference type="HOGENOM" id="CLU_089475_1_0_5"/>
<dbReference type="BioCyc" id="MEXT419610:MEXT_RS13595-MONOMER"/>
<dbReference type="GO" id="GO:0005829">
    <property type="term" value="C:cytosol"/>
    <property type="evidence" value="ECO:0007669"/>
    <property type="project" value="TreeGrafter"/>
</dbReference>
<dbReference type="GO" id="GO:0043024">
    <property type="term" value="F:ribosomal small subunit binding"/>
    <property type="evidence" value="ECO:0007669"/>
    <property type="project" value="TreeGrafter"/>
</dbReference>
<dbReference type="GO" id="GO:0030490">
    <property type="term" value="P:maturation of SSU-rRNA"/>
    <property type="evidence" value="ECO:0007669"/>
    <property type="project" value="UniProtKB-UniRule"/>
</dbReference>
<dbReference type="Gene3D" id="3.30.300.20">
    <property type="match status" value="1"/>
</dbReference>
<dbReference type="HAMAP" id="MF_00003">
    <property type="entry name" value="RbfA"/>
    <property type="match status" value="1"/>
</dbReference>
<dbReference type="InterPro" id="IPR015946">
    <property type="entry name" value="KH_dom-like_a/b"/>
</dbReference>
<dbReference type="InterPro" id="IPR000238">
    <property type="entry name" value="RbfA"/>
</dbReference>
<dbReference type="InterPro" id="IPR023799">
    <property type="entry name" value="RbfA_dom_sf"/>
</dbReference>
<dbReference type="InterPro" id="IPR020053">
    <property type="entry name" value="Ribosome-bd_factorA_CS"/>
</dbReference>
<dbReference type="NCBIfam" id="NF001802">
    <property type="entry name" value="PRK00521.2-5"/>
    <property type="match status" value="1"/>
</dbReference>
<dbReference type="NCBIfam" id="TIGR00082">
    <property type="entry name" value="rbfA"/>
    <property type="match status" value="1"/>
</dbReference>
<dbReference type="PANTHER" id="PTHR33515">
    <property type="entry name" value="RIBOSOME-BINDING FACTOR A, CHLOROPLASTIC-RELATED"/>
    <property type="match status" value="1"/>
</dbReference>
<dbReference type="PANTHER" id="PTHR33515:SF1">
    <property type="entry name" value="RIBOSOME-BINDING FACTOR A, CHLOROPLASTIC-RELATED"/>
    <property type="match status" value="1"/>
</dbReference>
<dbReference type="Pfam" id="PF02033">
    <property type="entry name" value="RBFA"/>
    <property type="match status" value="1"/>
</dbReference>
<dbReference type="SUPFAM" id="SSF89919">
    <property type="entry name" value="Ribosome-binding factor A, RbfA"/>
    <property type="match status" value="1"/>
</dbReference>
<dbReference type="PROSITE" id="PS01319">
    <property type="entry name" value="RBFA"/>
    <property type="match status" value="1"/>
</dbReference>
<protein>
    <recommendedName>
        <fullName evidence="1">Ribosome-binding factor A</fullName>
    </recommendedName>
</protein>
<accession>A9W681</accession>
<organism>
    <name type="scientific">Methylorubrum extorquens (strain PA1)</name>
    <name type="common">Methylobacterium extorquens</name>
    <dbReference type="NCBI Taxonomy" id="419610"/>
    <lineage>
        <taxon>Bacteria</taxon>
        <taxon>Pseudomonadati</taxon>
        <taxon>Pseudomonadota</taxon>
        <taxon>Alphaproteobacteria</taxon>
        <taxon>Hyphomicrobiales</taxon>
        <taxon>Methylobacteriaceae</taxon>
        <taxon>Methylorubrum</taxon>
    </lineage>
</organism>
<keyword id="KW-0963">Cytoplasm</keyword>
<keyword id="KW-0690">Ribosome biogenesis</keyword>
<reference key="1">
    <citation type="submission" date="2007-12" db="EMBL/GenBank/DDBJ databases">
        <title>Complete sequence of Methylobacterium extorquens PA1.</title>
        <authorList>
            <consortium name="US DOE Joint Genome Institute"/>
            <person name="Copeland A."/>
            <person name="Lucas S."/>
            <person name="Lapidus A."/>
            <person name="Barry K."/>
            <person name="Glavina del Rio T."/>
            <person name="Dalin E."/>
            <person name="Tice H."/>
            <person name="Pitluck S."/>
            <person name="Saunders E."/>
            <person name="Brettin T."/>
            <person name="Bruce D."/>
            <person name="Detter J.C."/>
            <person name="Han C."/>
            <person name="Schmutz J."/>
            <person name="Larimer F."/>
            <person name="Land M."/>
            <person name="Hauser L."/>
            <person name="Kyrpides N."/>
            <person name="Kim E."/>
            <person name="Marx C."/>
            <person name="Richardson P."/>
        </authorList>
    </citation>
    <scope>NUCLEOTIDE SEQUENCE [LARGE SCALE GENOMIC DNA]</scope>
    <source>
        <strain>PA1</strain>
    </source>
</reference>
<name>RBFA_METEP</name>
<gene>
    <name evidence="1" type="primary">rbfA</name>
    <name type="ordered locus">Mext_2696</name>
</gene>
<sequence>MAQKQTPSGPTQRQQRVAELIRHALAEVLQRGDIQDPVLGSHVVTVPEVRMSPDLKLATAYVMPLGGQDEAPVIAALERHKKILRQEVARRVNLKFAPDLRFRRDETFDEAARIDQLLRSEKVQRDLESAPREDDEGEPDSSSRD</sequence>